<geneLocation type="plasmid">
    <name>pNRC100</name>
</geneLocation>
<geneLocation type="plasmid">
    <name>pNRC200</name>
</geneLocation>
<protein>
    <recommendedName>
        <fullName>ORC1-type DNA replication protein 9</fullName>
    </recommendedName>
</protein>
<keyword id="KW-0067">ATP-binding</keyword>
<keyword id="KW-0235">DNA replication</keyword>
<keyword id="KW-0547">Nucleotide-binding</keyword>
<keyword id="KW-0614">Plasmid</keyword>
<keyword id="KW-1185">Reference proteome</keyword>
<reference key="1">
    <citation type="journal article" date="1998" name="Genome Res.">
        <title>Snapshot of a large dynamic replicon in a halophilic archaeon: megaplasmid or minichromosome?</title>
        <authorList>
            <person name="Ng W.V."/>
            <person name="Ciufo S.A."/>
            <person name="Smith T.M."/>
            <person name="Bumgarner R.E."/>
            <person name="Baskin D."/>
            <person name="Faust J."/>
            <person name="Hall B."/>
            <person name="Loretz C."/>
            <person name="Seto J."/>
            <person name="Slagel J."/>
            <person name="Hood L."/>
            <person name="DasSarma S."/>
        </authorList>
    </citation>
    <scope>NUCLEOTIDE SEQUENCE [LARGE SCALE GENOMIC DNA]</scope>
    <source>
        <strain>ATCC 700922 / JCM 11081 / NRC-1</strain>
        <plasmid>pNRC100</plasmid>
    </source>
</reference>
<reference key="2">
    <citation type="journal article" date="2000" name="Proc. Natl. Acad. Sci. U.S.A.">
        <title>Genome sequence of Halobacterium species NRC-1.</title>
        <authorList>
            <person name="Ng W.V."/>
            <person name="Kennedy S.P."/>
            <person name="Mahairas G.G."/>
            <person name="Berquist B."/>
            <person name="Pan M."/>
            <person name="Shukla H.D."/>
            <person name="Lasky S.R."/>
            <person name="Baliga N.S."/>
            <person name="Thorsson V."/>
            <person name="Sbrogna J."/>
            <person name="Swartzell S."/>
            <person name="Weir D."/>
            <person name="Hall J."/>
            <person name="Dahl T.A."/>
            <person name="Welti R."/>
            <person name="Goo Y.A."/>
            <person name="Leithauser B."/>
            <person name="Keller K."/>
            <person name="Cruz R."/>
            <person name="Danson M.J."/>
            <person name="Hough D.W."/>
            <person name="Maddocks D.G."/>
            <person name="Jablonski P.E."/>
            <person name="Krebs M.P."/>
            <person name="Angevine C.M."/>
            <person name="Dale H."/>
            <person name="Isenbarger T.A."/>
            <person name="Peck R.F."/>
            <person name="Pohlschroder M."/>
            <person name="Spudich J.L."/>
            <person name="Jung K.-H."/>
            <person name="Alam M."/>
            <person name="Freitas T."/>
            <person name="Hou S."/>
            <person name="Daniels C.J."/>
            <person name="Dennis P.P."/>
            <person name="Omer A.D."/>
            <person name="Ebhardt H."/>
            <person name="Lowe T.M."/>
            <person name="Liang P."/>
            <person name="Riley M."/>
            <person name="Hood L."/>
            <person name="DasSarma S."/>
        </authorList>
    </citation>
    <scope>NUCLEOTIDE SEQUENCE [LARGE SCALE GENOMIC DNA]</scope>
    <source>
        <strain>ATCC 700922 / JCM 11081 / NRC-1</strain>
        <plasmid>pNRC100</plasmid>
        <plasmid>pNRC200</plasmid>
    </source>
</reference>
<reference key="3">
    <citation type="journal article" date="2007" name="BMC Genet.">
        <title>Essential and non-essential DNA replication genes in the model halophilic Archaeon, Halobacterium sp. NRC-1.</title>
        <authorList>
            <person name="Berquist B.R."/>
            <person name="DasSarma P."/>
            <person name="DasSarma S."/>
        </authorList>
    </citation>
    <scope>DISRUPTION PHENOTYPE</scope>
    <source>
        <strain>ATCC 700922 / JCM 11081 / NRC-1</strain>
    </source>
</reference>
<reference key="4">
    <citation type="journal article" date="2009" name="J. Bacteriol.">
        <title>Multiple replication origins of Halobacterium sp. strain NRC-1: properties of the conserved orc7-dependent oriC1.</title>
        <authorList>
            <person name="Coker J.A."/>
            <person name="DasSarma P."/>
            <person name="Capes M."/>
            <person name="Wallace T."/>
            <person name="McGarrity K."/>
            <person name="Gessler R."/>
            <person name="Liu J."/>
            <person name="Xiang H."/>
            <person name="Tatusov R."/>
            <person name="Berquist B.R."/>
            <person name="DasSarma S."/>
        </authorList>
    </citation>
    <scope>DISRUPTION PHENOTYPE</scope>
    <source>
        <strain>ATCC 700922 / JCM 11081 / NRC-1</strain>
    </source>
</reference>
<comment type="function">
    <text evidence="1">Involved in regulation of DNA replication.</text>
</comment>
<comment type="disruption phenotype">
    <text evidence="2 3">Not essential for normal growth in a single deletion. Required together with orc2 and orc10 in a minimal orc strain.</text>
</comment>
<comment type="similarity">
    <text evidence="4">Belongs to the CDC6/cdc18 family.</text>
</comment>
<dbReference type="EMBL" id="AF016485">
    <property type="protein sequence ID" value="AAC82854.1"/>
    <property type="molecule type" value="Genomic_DNA"/>
</dbReference>
<dbReference type="EMBL" id="AE004438">
    <property type="protein sequence ID" value="AAG20777.1"/>
    <property type="molecule type" value="Genomic_DNA"/>
</dbReference>
<dbReference type="PIR" id="T08287">
    <property type="entry name" value="T08287"/>
</dbReference>
<dbReference type="SMR" id="O51974"/>
<dbReference type="KEGG" id="hal:AAC82854.1"/>
<dbReference type="KEGG" id="hal:VNG_6091G"/>
<dbReference type="PATRIC" id="fig|64091.14.peg.2145"/>
<dbReference type="HOGENOM" id="CLU_025112_0_0_2"/>
<dbReference type="InParanoid" id="O51974"/>
<dbReference type="Proteomes" id="UP000000554">
    <property type="component" value="Plasmid pNRC100"/>
</dbReference>
<dbReference type="Proteomes" id="UP000000554">
    <property type="component" value="Plasmid pNRC200"/>
</dbReference>
<dbReference type="GO" id="GO:0005524">
    <property type="term" value="F:ATP binding"/>
    <property type="evidence" value="ECO:0007669"/>
    <property type="project" value="UniProtKB-KW"/>
</dbReference>
<dbReference type="GO" id="GO:0016887">
    <property type="term" value="F:ATP hydrolysis activity"/>
    <property type="evidence" value="ECO:0007669"/>
    <property type="project" value="InterPro"/>
</dbReference>
<dbReference type="GO" id="GO:0006260">
    <property type="term" value="P:DNA replication"/>
    <property type="evidence" value="ECO:0007669"/>
    <property type="project" value="UniProtKB-KW"/>
</dbReference>
<dbReference type="CDD" id="cd18139">
    <property type="entry name" value="HLD_clamp_RarA"/>
    <property type="match status" value="1"/>
</dbReference>
<dbReference type="FunFam" id="3.40.50.300:FF:001565">
    <property type="entry name" value="Orc1-type DNA replication protein"/>
    <property type="match status" value="1"/>
</dbReference>
<dbReference type="Gene3D" id="1.10.8.60">
    <property type="match status" value="1"/>
</dbReference>
<dbReference type="Gene3D" id="3.40.50.300">
    <property type="entry name" value="P-loop containing nucleotide triphosphate hydrolases"/>
    <property type="match status" value="1"/>
</dbReference>
<dbReference type="InterPro" id="IPR003593">
    <property type="entry name" value="AAA+_ATPase"/>
</dbReference>
<dbReference type="InterPro" id="IPR049945">
    <property type="entry name" value="AAA_22"/>
</dbReference>
<dbReference type="InterPro" id="IPR055237">
    <property type="entry name" value="Cdc6_lid"/>
</dbReference>
<dbReference type="InterPro" id="IPR050311">
    <property type="entry name" value="ORC1/CDC6"/>
</dbReference>
<dbReference type="InterPro" id="IPR027417">
    <property type="entry name" value="P-loop_NTPase"/>
</dbReference>
<dbReference type="PANTHER" id="PTHR10763">
    <property type="entry name" value="CELL DIVISION CONTROL PROTEIN 6-RELATED"/>
    <property type="match status" value="1"/>
</dbReference>
<dbReference type="PANTHER" id="PTHR10763:SF22">
    <property type="entry name" value="ORC1-TYPE DNA REPLICATION PROTEIN"/>
    <property type="match status" value="1"/>
</dbReference>
<dbReference type="Pfam" id="PF13401">
    <property type="entry name" value="AAA_22"/>
    <property type="match status" value="1"/>
</dbReference>
<dbReference type="Pfam" id="PF22703">
    <property type="entry name" value="Cdc6_lid"/>
    <property type="match status" value="1"/>
</dbReference>
<dbReference type="SMART" id="SM00382">
    <property type="entry name" value="AAA"/>
    <property type="match status" value="1"/>
</dbReference>
<dbReference type="SUPFAM" id="SSF52540">
    <property type="entry name" value="P-loop containing nucleoside triphosphate hydrolases"/>
    <property type="match status" value="1"/>
</dbReference>
<gene>
    <name type="primary">orc9-1</name>
    <name type="ordered locus">VNG_5094G</name>
</gene>
<gene>
    <name type="primary">orc9-2</name>
    <name type="ordered locus">VNG_6091G</name>
</gene>
<sequence>MTCRRITFVPNFMIRDARVLRAGFVPREVEHRDAEVNHLSSVLEPITNGEPADTAIVTGPSGTGKTCISQFVTERLREEVLNVEATYVNCWRNYTRFRTLYQILDDFGETIDIHRQSTPHDELIDRLQQYDGPRTVIILDEVDQLEDPGIIYDLHSLPHFAVICIANKEEDLFSRVDDRLVSRLRSSEHVRMDKYHDEQLHDILAARVKGGLDQDVITTNQLDRIADAAAGDARLAIGILRTAASKADRESRERITDDILLNAAEDARAQIKQKNLDSLIPHQRLVYDVVREHGPLGPSEIYDHYKRKVDDPRTKRTIRTYLSKMTQYNVLEAEGTSRDREYSLVDSTAPSVTQ</sequence>
<accession>O51974</accession>
<feature type="chain" id="PRO_0000428866" description="ORC1-type DNA replication protein 9">
    <location>
        <begin position="1"/>
        <end position="354"/>
    </location>
</feature>
<feature type="binding site" evidence="1">
    <location>
        <begin position="63"/>
        <end position="67"/>
    </location>
    <ligand>
        <name>ATP</name>
        <dbReference type="ChEBI" id="CHEBI:30616"/>
    </ligand>
</feature>
<feature type="binding site" evidence="1">
    <location>
        <position position="195"/>
    </location>
    <ligand>
        <name>ATP</name>
        <dbReference type="ChEBI" id="CHEBI:30616"/>
    </ligand>
</feature>
<feature type="binding site" evidence="1">
    <location>
        <position position="207"/>
    </location>
    <ligand>
        <name>ATP</name>
        <dbReference type="ChEBI" id="CHEBI:30616"/>
    </ligand>
</feature>
<name>CDC69_HALSA</name>
<evidence type="ECO:0000250" key="1"/>
<evidence type="ECO:0000269" key="2">
    <source>
    </source>
</evidence>
<evidence type="ECO:0000269" key="3">
    <source>
    </source>
</evidence>
<evidence type="ECO:0000305" key="4"/>
<organism>
    <name type="scientific">Halobacterium salinarum (strain ATCC 700922 / JCM 11081 / NRC-1)</name>
    <name type="common">Halobacterium halobium</name>
    <dbReference type="NCBI Taxonomy" id="64091"/>
    <lineage>
        <taxon>Archaea</taxon>
        <taxon>Methanobacteriati</taxon>
        <taxon>Methanobacteriota</taxon>
        <taxon>Stenosarchaea group</taxon>
        <taxon>Halobacteria</taxon>
        <taxon>Halobacteriales</taxon>
        <taxon>Halobacteriaceae</taxon>
        <taxon>Halobacterium</taxon>
        <taxon>Halobacterium salinarum NRC-34001</taxon>
    </lineage>
</organism>
<proteinExistence type="inferred from homology"/>